<protein>
    <recommendedName>
        <fullName evidence="1">Translation initiation factor 2 subunit beta</fullName>
    </recommendedName>
    <alternativeName>
        <fullName evidence="1">aIF2-beta</fullName>
    </alternativeName>
    <alternativeName>
        <fullName evidence="1">eIF-2-beta</fullName>
    </alternativeName>
</protein>
<gene>
    <name evidence="1" type="primary">eif2b</name>
    <name type="ordered locus">VNG_1262G</name>
</gene>
<keyword id="KW-0396">Initiation factor</keyword>
<keyword id="KW-0648">Protein biosynthesis</keyword>
<keyword id="KW-1185">Reference proteome</keyword>
<comment type="function">
    <text evidence="1">eIF-2 functions in the early steps of protein synthesis by forming a ternary complex with GTP and initiator tRNA.</text>
</comment>
<comment type="subunit">
    <text evidence="1">Heterotrimer composed of an alpha, a beta and a gamma chain.</text>
</comment>
<comment type="similarity">
    <text evidence="1">Belongs to the eIF-2-beta/eIF-5 family.</text>
</comment>
<feature type="chain" id="PRO_0000137419" description="Translation initiation factor 2 subunit beta">
    <location>
        <begin position="1"/>
        <end position="132"/>
    </location>
</feature>
<feature type="region of interest" description="Disordered" evidence="2">
    <location>
        <begin position="1"/>
        <end position="30"/>
    </location>
</feature>
<organism>
    <name type="scientific">Halobacterium salinarum (strain ATCC 700922 / JCM 11081 / NRC-1)</name>
    <name type="common">Halobacterium halobium</name>
    <dbReference type="NCBI Taxonomy" id="64091"/>
    <lineage>
        <taxon>Archaea</taxon>
        <taxon>Methanobacteriati</taxon>
        <taxon>Methanobacteriota</taxon>
        <taxon>Stenosarchaea group</taxon>
        <taxon>Halobacteria</taxon>
        <taxon>Halobacteriales</taxon>
        <taxon>Halobacteriaceae</taxon>
        <taxon>Halobacterium</taxon>
        <taxon>Halobacterium salinarum NRC-34001</taxon>
    </lineage>
</organism>
<proteinExistence type="inferred from homology"/>
<dbReference type="EMBL" id="AE004437">
    <property type="protein sequence ID" value="AAG19619.1"/>
    <property type="molecule type" value="Genomic_DNA"/>
</dbReference>
<dbReference type="PIR" id="G84281">
    <property type="entry name" value="G84281"/>
</dbReference>
<dbReference type="RefSeq" id="WP_010902915.1">
    <property type="nucleotide sequence ID" value="NC_002607.1"/>
</dbReference>
<dbReference type="SMR" id="Q9HQ97"/>
<dbReference type="FunCoup" id="Q9HQ97">
    <property type="interactions" value="68"/>
</dbReference>
<dbReference type="STRING" id="64091.VNG_1262G"/>
<dbReference type="PaxDb" id="64091-VNG_1262G"/>
<dbReference type="KEGG" id="hal:VNG_1262G"/>
<dbReference type="PATRIC" id="fig|64091.14.peg.969"/>
<dbReference type="HOGENOM" id="CLU_026663_3_1_2"/>
<dbReference type="InParanoid" id="Q9HQ97"/>
<dbReference type="OrthoDB" id="38099at2157"/>
<dbReference type="PhylomeDB" id="Q9HQ97"/>
<dbReference type="Proteomes" id="UP000000554">
    <property type="component" value="Chromosome"/>
</dbReference>
<dbReference type="GO" id="GO:0003743">
    <property type="term" value="F:translation initiation factor activity"/>
    <property type="evidence" value="ECO:0000318"/>
    <property type="project" value="GO_Central"/>
</dbReference>
<dbReference type="FunFam" id="3.30.30.170:FF:000008">
    <property type="match status" value="1"/>
</dbReference>
<dbReference type="Gene3D" id="3.30.30.170">
    <property type="match status" value="1"/>
</dbReference>
<dbReference type="HAMAP" id="MF_00232">
    <property type="entry name" value="eIF_2_beta"/>
    <property type="match status" value="1"/>
</dbReference>
<dbReference type="InterPro" id="IPR045196">
    <property type="entry name" value="IF2/IF5"/>
</dbReference>
<dbReference type="InterPro" id="IPR004458">
    <property type="entry name" value="TIF2_bsu_arc"/>
</dbReference>
<dbReference type="InterPro" id="IPR002735">
    <property type="entry name" value="Transl_init_fac_IF2/IF5_dom"/>
</dbReference>
<dbReference type="InterPro" id="IPR016189">
    <property type="entry name" value="Transl_init_fac_IF2/IF5_N"/>
</dbReference>
<dbReference type="InterPro" id="IPR016190">
    <property type="entry name" value="Transl_init_fac_IF2/IF5_Zn-bd"/>
</dbReference>
<dbReference type="NCBIfam" id="NF003067">
    <property type="entry name" value="PRK03988.1"/>
    <property type="match status" value="1"/>
</dbReference>
<dbReference type="PANTHER" id="PTHR23001">
    <property type="entry name" value="EUKARYOTIC TRANSLATION INITIATION FACTOR"/>
    <property type="match status" value="1"/>
</dbReference>
<dbReference type="PANTHER" id="PTHR23001:SF3">
    <property type="entry name" value="EUKARYOTIC TRANSLATION INITIATION FACTOR 2 SUBUNIT 2"/>
    <property type="match status" value="1"/>
</dbReference>
<dbReference type="Pfam" id="PF01873">
    <property type="entry name" value="eIF-5_eIF-2B"/>
    <property type="match status" value="1"/>
</dbReference>
<dbReference type="SMART" id="SM00653">
    <property type="entry name" value="eIF2B_5"/>
    <property type="match status" value="1"/>
</dbReference>
<dbReference type="SUPFAM" id="SSF100966">
    <property type="entry name" value="Translation initiation factor 2 beta, aIF2beta, N-terminal domain"/>
    <property type="match status" value="1"/>
</dbReference>
<dbReference type="SUPFAM" id="SSF75689">
    <property type="entry name" value="Zinc-binding domain of translation initiation factor 2 beta"/>
    <property type="match status" value="1"/>
</dbReference>
<sequence length="132" mass="14683">MDYEEQLDRAMDEKPDVTGSETRFEVPDPNVRKEGNVTVYENFQATLDALSRTQDHVLKFLQNEVGTSASIDESGRARLTGEFGQRRVSDTLDAYVETYVTCPECGLPDTNLETDGDTIQLHCEACGARSTV</sequence>
<reference key="1">
    <citation type="journal article" date="2000" name="Proc. Natl. Acad. Sci. U.S.A.">
        <title>Genome sequence of Halobacterium species NRC-1.</title>
        <authorList>
            <person name="Ng W.V."/>
            <person name="Kennedy S.P."/>
            <person name="Mahairas G.G."/>
            <person name="Berquist B."/>
            <person name="Pan M."/>
            <person name="Shukla H.D."/>
            <person name="Lasky S.R."/>
            <person name="Baliga N.S."/>
            <person name="Thorsson V."/>
            <person name="Sbrogna J."/>
            <person name="Swartzell S."/>
            <person name="Weir D."/>
            <person name="Hall J."/>
            <person name="Dahl T.A."/>
            <person name="Welti R."/>
            <person name="Goo Y.A."/>
            <person name="Leithauser B."/>
            <person name="Keller K."/>
            <person name="Cruz R."/>
            <person name="Danson M.J."/>
            <person name="Hough D.W."/>
            <person name="Maddocks D.G."/>
            <person name="Jablonski P.E."/>
            <person name="Krebs M.P."/>
            <person name="Angevine C.M."/>
            <person name="Dale H."/>
            <person name="Isenbarger T.A."/>
            <person name="Peck R.F."/>
            <person name="Pohlschroder M."/>
            <person name="Spudich J.L."/>
            <person name="Jung K.-H."/>
            <person name="Alam M."/>
            <person name="Freitas T."/>
            <person name="Hou S."/>
            <person name="Daniels C.J."/>
            <person name="Dennis P.P."/>
            <person name="Omer A.D."/>
            <person name="Ebhardt H."/>
            <person name="Lowe T.M."/>
            <person name="Liang P."/>
            <person name="Riley M."/>
            <person name="Hood L."/>
            <person name="DasSarma S."/>
        </authorList>
    </citation>
    <scope>NUCLEOTIDE SEQUENCE [LARGE SCALE GENOMIC DNA]</scope>
    <source>
        <strain>ATCC 700922 / JCM 11081 / NRC-1</strain>
    </source>
</reference>
<accession>Q9HQ97</accession>
<evidence type="ECO:0000255" key="1">
    <source>
        <dbReference type="HAMAP-Rule" id="MF_00232"/>
    </source>
</evidence>
<evidence type="ECO:0000256" key="2">
    <source>
        <dbReference type="SAM" id="MobiDB-lite"/>
    </source>
</evidence>
<name>IF2B_HALSA</name>